<comment type="function">
    <text evidence="1">Ligates lysine onto the cytidine present at position 34 of the AUA codon-specific tRNA(Ile) that contains the anticodon CAU, in an ATP-dependent manner. Cytidine is converted to lysidine, thus changing the amino acid specificity of the tRNA from methionine to isoleucine.</text>
</comment>
<comment type="catalytic activity">
    <reaction evidence="1">
        <text>cytidine(34) in tRNA(Ile2) + L-lysine + ATP = lysidine(34) in tRNA(Ile2) + AMP + diphosphate + H(+)</text>
        <dbReference type="Rhea" id="RHEA:43744"/>
        <dbReference type="Rhea" id="RHEA-COMP:10625"/>
        <dbReference type="Rhea" id="RHEA-COMP:10670"/>
        <dbReference type="ChEBI" id="CHEBI:15378"/>
        <dbReference type="ChEBI" id="CHEBI:30616"/>
        <dbReference type="ChEBI" id="CHEBI:32551"/>
        <dbReference type="ChEBI" id="CHEBI:33019"/>
        <dbReference type="ChEBI" id="CHEBI:82748"/>
        <dbReference type="ChEBI" id="CHEBI:83665"/>
        <dbReference type="ChEBI" id="CHEBI:456215"/>
        <dbReference type="EC" id="6.3.4.19"/>
    </reaction>
</comment>
<comment type="subcellular location">
    <subcellularLocation>
        <location evidence="1">Cytoplasm</location>
    </subcellularLocation>
</comment>
<comment type="domain">
    <text>The N-terminal region contains the highly conserved SGGXDS motif, predicted to be a P-loop motif involved in ATP binding.</text>
</comment>
<comment type="similarity">
    <text evidence="1">Belongs to the tRNA(Ile)-lysidine synthase family.</text>
</comment>
<reference key="1">
    <citation type="journal article" date="2006" name="BMC Genomics">
        <title>Comparative genome analysis: selection pressure on the Borrelia vls cassettes is essential for infectivity.</title>
        <authorList>
            <person name="Gloeckner G."/>
            <person name="Schulte-Spechtel U."/>
            <person name="Schilhabel M."/>
            <person name="Felder M."/>
            <person name="Suehnel J."/>
            <person name="Wilske B."/>
            <person name="Platzer M."/>
        </authorList>
    </citation>
    <scope>NUCLEOTIDE SEQUENCE [LARGE SCALE GENOMIC DNA]</scope>
    <source>
        <strain>PKo</strain>
    </source>
</reference>
<reference key="2">
    <citation type="journal article" date="2011" name="J. Bacteriol.">
        <title>Whole-genome sequences of two Borrelia afzelii and two Borrelia garinii Lyme disease agent isolates.</title>
        <authorList>
            <person name="Casjens S.R."/>
            <person name="Mongodin E.F."/>
            <person name="Qiu W.G."/>
            <person name="Dunn J.J."/>
            <person name="Luft B.J."/>
            <person name="Fraser-Liggett C.M."/>
            <person name="Schutzer S.E."/>
        </authorList>
    </citation>
    <scope>NUCLEOTIDE SEQUENCE [LARGE SCALE GENOMIC DNA]</scope>
    <source>
        <strain>PKo</strain>
    </source>
</reference>
<evidence type="ECO:0000255" key="1">
    <source>
        <dbReference type="HAMAP-Rule" id="MF_01161"/>
    </source>
</evidence>
<proteinExistence type="inferred from homology"/>
<feature type="chain" id="PRO_1000065603" description="tRNA(Ile)-lysidine synthase">
    <location>
        <begin position="1"/>
        <end position="440"/>
    </location>
</feature>
<feature type="binding site" evidence="1">
    <location>
        <begin position="31"/>
        <end position="36"/>
    </location>
    <ligand>
        <name>ATP</name>
        <dbReference type="ChEBI" id="CHEBI:30616"/>
    </ligand>
</feature>
<gene>
    <name evidence="1" type="primary">tilS</name>
    <name type="ordered locus">BAPKO_0840</name>
    <name type="ordered locus">BafPKo_0816</name>
</gene>
<dbReference type="EC" id="6.3.4.19" evidence="1"/>
<dbReference type="EMBL" id="CP000395">
    <property type="protein sequence ID" value="ABH02064.1"/>
    <property type="molecule type" value="Genomic_DNA"/>
</dbReference>
<dbReference type="EMBL" id="CP002933">
    <property type="protein sequence ID" value="AEL70005.1"/>
    <property type="molecule type" value="Genomic_DNA"/>
</dbReference>
<dbReference type="RefSeq" id="WP_011601226.1">
    <property type="nucleotide sequence ID" value="NC_008277.1"/>
</dbReference>
<dbReference type="SMR" id="Q0SM64"/>
<dbReference type="STRING" id="29518.BLA32_00280"/>
<dbReference type="KEGG" id="baf:BAPKO_0840"/>
<dbReference type="KEGG" id="bafz:BafPKo_0816"/>
<dbReference type="PATRIC" id="fig|390236.22.peg.777"/>
<dbReference type="eggNOG" id="COG0037">
    <property type="taxonomic scope" value="Bacteria"/>
</dbReference>
<dbReference type="HOGENOM" id="CLU_050646_0_0_12"/>
<dbReference type="OrthoDB" id="9807403at2"/>
<dbReference type="Proteomes" id="UP000005216">
    <property type="component" value="Chromosome"/>
</dbReference>
<dbReference type="GO" id="GO:0005737">
    <property type="term" value="C:cytoplasm"/>
    <property type="evidence" value="ECO:0007669"/>
    <property type="project" value="UniProtKB-SubCell"/>
</dbReference>
<dbReference type="GO" id="GO:0005524">
    <property type="term" value="F:ATP binding"/>
    <property type="evidence" value="ECO:0007669"/>
    <property type="project" value="UniProtKB-UniRule"/>
</dbReference>
<dbReference type="GO" id="GO:0032267">
    <property type="term" value="F:tRNA(Ile)-lysidine synthase activity"/>
    <property type="evidence" value="ECO:0007669"/>
    <property type="project" value="UniProtKB-EC"/>
</dbReference>
<dbReference type="GO" id="GO:0006400">
    <property type="term" value="P:tRNA modification"/>
    <property type="evidence" value="ECO:0007669"/>
    <property type="project" value="UniProtKB-UniRule"/>
</dbReference>
<dbReference type="CDD" id="cd01992">
    <property type="entry name" value="TilS_N"/>
    <property type="match status" value="1"/>
</dbReference>
<dbReference type="Gene3D" id="3.40.50.620">
    <property type="entry name" value="HUPs"/>
    <property type="match status" value="1"/>
</dbReference>
<dbReference type="HAMAP" id="MF_01161">
    <property type="entry name" value="tRNA_Ile_lys_synt"/>
    <property type="match status" value="1"/>
</dbReference>
<dbReference type="InterPro" id="IPR014729">
    <property type="entry name" value="Rossmann-like_a/b/a_fold"/>
</dbReference>
<dbReference type="InterPro" id="IPR011063">
    <property type="entry name" value="TilS/TtcA_N"/>
</dbReference>
<dbReference type="InterPro" id="IPR012094">
    <property type="entry name" value="tRNA_Ile_lys_synt"/>
</dbReference>
<dbReference type="InterPro" id="IPR012795">
    <property type="entry name" value="tRNA_Ile_lys_synt_N"/>
</dbReference>
<dbReference type="NCBIfam" id="TIGR02432">
    <property type="entry name" value="lysidine_TilS_N"/>
    <property type="match status" value="1"/>
</dbReference>
<dbReference type="PANTHER" id="PTHR43033">
    <property type="entry name" value="TRNA(ILE)-LYSIDINE SYNTHASE-RELATED"/>
    <property type="match status" value="1"/>
</dbReference>
<dbReference type="PANTHER" id="PTHR43033:SF1">
    <property type="entry name" value="TRNA(ILE)-LYSIDINE SYNTHASE-RELATED"/>
    <property type="match status" value="1"/>
</dbReference>
<dbReference type="Pfam" id="PF01171">
    <property type="entry name" value="ATP_bind_3"/>
    <property type="match status" value="1"/>
</dbReference>
<dbReference type="SUPFAM" id="SSF52402">
    <property type="entry name" value="Adenine nucleotide alpha hydrolases-like"/>
    <property type="match status" value="1"/>
</dbReference>
<protein>
    <recommendedName>
        <fullName evidence="1">tRNA(Ile)-lysidine synthase</fullName>
        <ecNumber evidence="1">6.3.4.19</ecNumber>
    </recommendedName>
    <alternativeName>
        <fullName evidence="1">tRNA(Ile)-2-lysyl-cytidine synthase</fullName>
    </alternativeName>
    <alternativeName>
        <fullName evidence="1">tRNA(Ile)-lysidine synthetase</fullName>
    </alternativeName>
</protein>
<accession>Q0SM64</accession>
<accession>G0IRX0</accession>
<name>TILS_BORAP</name>
<keyword id="KW-0067">ATP-binding</keyword>
<keyword id="KW-0963">Cytoplasm</keyword>
<keyword id="KW-0436">Ligase</keyword>
<keyword id="KW-0547">Nucleotide-binding</keyword>
<keyword id="KW-0819">tRNA processing</keyword>
<organism>
    <name type="scientific">Borreliella afzelii (strain PKo)</name>
    <name type="common">Borrelia afzelii</name>
    <dbReference type="NCBI Taxonomy" id="390236"/>
    <lineage>
        <taxon>Bacteria</taxon>
        <taxon>Pseudomonadati</taxon>
        <taxon>Spirochaetota</taxon>
        <taxon>Spirochaetia</taxon>
        <taxon>Spirochaetales</taxon>
        <taxon>Borreliaceae</taxon>
        <taxon>Borreliella</taxon>
    </lineage>
</organism>
<sequence length="440" mass="51673">MHFLDDNIQIKIDKFYKKNSLNKNRVIVAFSGGADSTTLLLNLKYYLSNNIIAFYFAHFIRPDNEQNKEIEHVKGFCDLYNIALQIKKCDIDIKSESVRLGVSIEELARKCRYNALENALKENDANYIALAHNENDQIETIIMRFFQGSFLDGLAGIPSVNKNIIRPLLEVSRPEIENFLSLNNIRVFIDSTNSQNLYLRNKVRNNLLPSIEKIFKGYEKCLKRISEFSKEFVNYFEKDEFFPVEKGKYYYSFDLKAFLDFPKYLVFRLIFKILNSEGIVAKISYKALNELFKIEIDRKKNNVLLKTNDFFLEKRHNKINLIFKRDEKFYKPFDFILEVGKWHSLSLGKILLKCLECNAASVSRLKCCSYEFRYKFFKDKLKAKKFFSKFIRCNPIYLMLLALDNRLIGIIDLNTLNLVWSEKSILKKISISLIGGLLKE</sequence>